<proteinExistence type="inferred from homology"/>
<accession>C5CKU7</accession>
<sequence>MTRKYFGTDGIRGTVGQSPITPDFVLRLAHAVGRVLKKSEARPTVLIGKDTRISGYMLESALESGFNSAGVDVVLLGPLPTPGVAYLTRAQRASLGVVISASHNAYPDNGIKFFSAQGTKLDDAWELAVEAALEEAPVWVDSANLGKARRLNDAPGRYIEFCKSTFANDLTLRGMKLVVDAAHGAAYQVAPNVFHELGAEVSSIGCAPDGLNINKGFGATHPAALVEAVTAQKADYGIALDGDADRLQLVDASGRLFNGDELLYLMVAERIARGDKPAGVVGTLMTNKAIEVALRGQGIELVRAKVGDRYVLEELEKRGWLLGGEGSGHLLALDRHTTGDGIVSALQVLQACVRSGKTVAQLLAEITLFPQVLINVRLTPGQDWKNNDALAGETRRIEAELGDSGRVLIRASGTEPLVRVMVEARDAKQAQSCAQRLAATLEPAR</sequence>
<feature type="chain" id="PRO_1000215500" description="Phosphoglucosamine mutase">
    <location>
        <begin position="1"/>
        <end position="445"/>
    </location>
</feature>
<feature type="active site" description="Phosphoserine intermediate" evidence="1">
    <location>
        <position position="102"/>
    </location>
</feature>
<feature type="binding site" description="via phosphate group" evidence="1">
    <location>
        <position position="102"/>
    </location>
    <ligand>
        <name>Mg(2+)</name>
        <dbReference type="ChEBI" id="CHEBI:18420"/>
    </ligand>
</feature>
<feature type="binding site" evidence="1">
    <location>
        <position position="241"/>
    </location>
    <ligand>
        <name>Mg(2+)</name>
        <dbReference type="ChEBI" id="CHEBI:18420"/>
    </ligand>
</feature>
<feature type="binding site" evidence="1">
    <location>
        <position position="243"/>
    </location>
    <ligand>
        <name>Mg(2+)</name>
        <dbReference type="ChEBI" id="CHEBI:18420"/>
    </ligand>
</feature>
<feature type="binding site" evidence="1">
    <location>
        <position position="245"/>
    </location>
    <ligand>
        <name>Mg(2+)</name>
        <dbReference type="ChEBI" id="CHEBI:18420"/>
    </ligand>
</feature>
<feature type="modified residue" description="Phosphoserine" evidence="1">
    <location>
        <position position="102"/>
    </location>
</feature>
<organism>
    <name type="scientific">Variovorax paradoxus (strain S110)</name>
    <dbReference type="NCBI Taxonomy" id="543728"/>
    <lineage>
        <taxon>Bacteria</taxon>
        <taxon>Pseudomonadati</taxon>
        <taxon>Pseudomonadota</taxon>
        <taxon>Betaproteobacteria</taxon>
        <taxon>Burkholderiales</taxon>
        <taxon>Comamonadaceae</taxon>
        <taxon>Variovorax</taxon>
    </lineage>
</organism>
<keyword id="KW-0413">Isomerase</keyword>
<keyword id="KW-0460">Magnesium</keyword>
<keyword id="KW-0479">Metal-binding</keyword>
<keyword id="KW-0597">Phosphoprotein</keyword>
<evidence type="ECO:0000255" key="1">
    <source>
        <dbReference type="HAMAP-Rule" id="MF_01554"/>
    </source>
</evidence>
<protein>
    <recommendedName>
        <fullName evidence="1">Phosphoglucosamine mutase</fullName>
        <ecNumber evidence="1">5.4.2.10</ecNumber>
    </recommendedName>
</protein>
<reference key="1">
    <citation type="journal article" date="2011" name="J. Bacteriol.">
        <title>Complete genome sequence of the metabolically versatile plant growth-promoting endophyte, Variovorax paradoxus S110.</title>
        <authorList>
            <person name="Han J.I."/>
            <person name="Choi H.K."/>
            <person name="Lee S.W."/>
            <person name="Orwin P.M."/>
            <person name="Kim J."/>
            <person name="Laroe S.L."/>
            <person name="Kim T.G."/>
            <person name="O'Neil J."/>
            <person name="Leadbetter J.R."/>
            <person name="Lee S.Y."/>
            <person name="Hur C.G."/>
            <person name="Spain J.C."/>
            <person name="Ovchinnikova G."/>
            <person name="Goodwin L."/>
            <person name="Han C."/>
        </authorList>
    </citation>
    <scope>NUCLEOTIDE SEQUENCE [LARGE SCALE GENOMIC DNA]</scope>
    <source>
        <strain>S110</strain>
    </source>
</reference>
<comment type="function">
    <text evidence="1">Catalyzes the conversion of glucosamine-6-phosphate to glucosamine-1-phosphate.</text>
</comment>
<comment type="catalytic activity">
    <reaction evidence="1">
        <text>alpha-D-glucosamine 1-phosphate = D-glucosamine 6-phosphate</text>
        <dbReference type="Rhea" id="RHEA:23424"/>
        <dbReference type="ChEBI" id="CHEBI:58516"/>
        <dbReference type="ChEBI" id="CHEBI:58725"/>
        <dbReference type="EC" id="5.4.2.10"/>
    </reaction>
</comment>
<comment type="cofactor">
    <cofactor evidence="1">
        <name>Mg(2+)</name>
        <dbReference type="ChEBI" id="CHEBI:18420"/>
    </cofactor>
    <text evidence="1">Binds 1 Mg(2+) ion per subunit.</text>
</comment>
<comment type="PTM">
    <text evidence="1">Activated by phosphorylation.</text>
</comment>
<comment type="similarity">
    <text evidence="1">Belongs to the phosphohexose mutase family.</text>
</comment>
<name>GLMM_VARPS</name>
<dbReference type="EC" id="5.4.2.10" evidence="1"/>
<dbReference type="EMBL" id="CP001635">
    <property type="protein sequence ID" value="ACS19251.1"/>
    <property type="molecule type" value="Genomic_DNA"/>
</dbReference>
<dbReference type="SMR" id="C5CKU7"/>
<dbReference type="STRING" id="543728.Vapar_2626"/>
<dbReference type="KEGG" id="vap:Vapar_2626"/>
<dbReference type="eggNOG" id="COG1109">
    <property type="taxonomic scope" value="Bacteria"/>
</dbReference>
<dbReference type="HOGENOM" id="CLU_016950_7_0_4"/>
<dbReference type="OrthoDB" id="9803322at2"/>
<dbReference type="GO" id="GO:0005829">
    <property type="term" value="C:cytosol"/>
    <property type="evidence" value="ECO:0007669"/>
    <property type="project" value="TreeGrafter"/>
</dbReference>
<dbReference type="GO" id="GO:0000287">
    <property type="term" value="F:magnesium ion binding"/>
    <property type="evidence" value="ECO:0007669"/>
    <property type="project" value="UniProtKB-UniRule"/>
</dbReference>
<dbReference type="GO" id="GO:0008966">
    <property type="term" value="F:phosphoglucosamine mutase activity"/>
    <property type="evidence" value="ECO:0007669"/>
    <property type="project" value="UniProtKB-UniRule"/>
</dbReference>
<dbReference type="GO" id="GO:0004615">
    <property type="term" value="F:phosphomannomutase activity"/>
    <property type="evidence" value="ECO:0007669"/>
    <property type="project" value="TreeGrafter"/>
</dbReference>
<dbReference type="GO" id="GO:0005975">
    <property type="term" value="P:carbohydrate metabolic process"/>
    <property type="evidence" value="ECO:0007669"/>
    <property type="project" value="InterPro"/>
</dbReference>
<dbReference type="GO" id="GO:0009252">
    <property type="term" value="P:peptidoglycan biosynthetic process"/>
    <property type="evidence" value="ECO:0007669"/>
    <property type="project" value="TreeGrafter"/>
</dbReference>
<dbReference type="GO" id="GO:0006048">
    <property type="term" value="P:UDP-N-acetylglucosamine biosynthetic process"/>
    <property type="evidence" value="ECO:0007669"/>
    <property type="project" value="TreeGrafter"/>
</dbReference>
<dbReference type="CDD" id="cd05802">
    <property type="entry name" value="GlmM"/>
    <property type="match status" value="1"/>
</dbReference>
<dbReference type="FunFam" id="3.30.310.50:FF:000001">
    <property type="entry name" value="Phosphoglucosamine mutase"/>
    <property type="match status" value="1"/>
</dbReference>
<dbReference type="FunFam" id="3.40.120.10:FF:000001">
    <property type="entry name" value="Phosphoglucosamine mutase"/>
    <property type="match status" value="1"/>
</dbReference>
<dbReference type="FunFam" id="3.40.120.10:FF:000003">
    <property type="entry name" value="Phosphoglucosamine mutase"/>
    <property type="match status" value="1"/>
</dbReference>
<dbReference type="Gene3D" id="3.40.120.10">
    <property type="entry name" value="Alpha-D-Glucose-1,6-Bisphosphate, subunit A, domain 3"/>
    <property type="match status" value="3"/>
</dbReference>
<dbReference type="Gene3D" id="3.30.310.50">
    <property type="entry name" value="Alpha-D-phosphohexomutase, C-terminal domain"/>
    <property type="match status" value="1"/>
</dbReference>
<dbReference type="HAMAP" id="MF_01554_B">
    <property type="entry name" value="GlmM_B"/>
    <property type="match status" value="1"/>
</dbReference>
<dbReference type="InterPro" id="IPR005844">
    <property type="entry name" value="A-D-PHexomutase_a/b/a-I"/>
</dbReference>
<dbReference type="InterPro" id="IPR016055">
    <property type="entry name" value="A-D-PHexomutase_a/b/a-I/II/III"/>
</dbReference>
<dbReference type="InterPro" id="IPR005845">
    <property type="entry name" value="A-D-PHexomutase_a/b/a-II"/>
</dbReference>
<dbReference type="InterPro" id="IPR005846">
    <property type="entry name" value="A-D-PHexomutase_a/b/a-III"/>
</dbReference>
<dbReference type="InterPro" id="IPR005843">
    <property type="entry name" value="A-D-PHexomutase_C"/>
</dbReference>
<dbReference type="InterPro" id="IPR036900">
    <property type="entry name" value="A-D-PHexomutase_C_sf"/>
</dbReference>
<dbReference type="InterPro" id="IPR005841">
    <property type="entry name" value="Alpha-D-phosphohexomutase_SF"/>
</dbReference>
<dbReference type="InterPro" id="IPR006352">
    <property type="entry name" value="GlmM_bact"/>
</dbReference>
<dbReference type="InterPro" id="IPR050060">
    <property type="entry name" value="Phosphoglucosamine_mutase"/>
</dbReference>
<dbReference type="NCBIfam" id="TIGR01455">
    <property type="entry name" value="glmM"/>
    <property type="match status" value="1"/>
</dbReference>
<dbReference type="NCBIfam" id="NF008139">
    <property type="entry name" value="PRK10887.1"/>
    <property type="match status" value="1"/>
</dbReference>
<dbReference type="PANTHER" id="PTHR42946:SF1">
    <property type="entry name" value="PHOSPHOGLUCOMUTASE (ALPHA-D-GLUCOSE-1,6-BISPHOSPHATE-DEPENDENT)"/>
    <property type="match status" value="1"/>
</dbReference>
<dbReference type="PANTHER" id="PTHR42946">
    <property type="entry name" value="PHOSPHOHEXOSE MUTASE"/>
    <property type="match status" value="1"/>
</dbReference>
<dbReference type="Pfam" id="PF02878">
    <property type="entry name" value="PGM_PMM_I"/>
    <property type="match status" value="1"/>
</dbReference>
<dbReference type="Pfam" id="PF02879">
    <property type="entry name" value="PGM_PMM_II"/>
    <property type="match status" value="1"/>
</dbReference>
<dbReference type="Pfam" id="PF02880">
    <property type="entry name" value="PGM_PMM_III"/>
    <property type="match status" value="1"/>
</dbReference>
<dbReference type="Pfam" id="PF00408">
    <property type="entry name" value="PGM_PMM_IV"/>
    <property type="match status" value="1"/>
</dbReference>
<dbReference type="PRINTS" id="PR00509">
    <property type="entry name" value="PGMPMM"/>
</dbReference>
<dbReference type="SUPFAM" id="SSF55957">
    <property type="entry name" value="Phosphoglucomutase, C-terminal domain"/>
    <property type="match status" value="1"/>
</dbReference>
<dbReference type="SUPFAM" id="SSF53738">
    <property type="entry name" value="Phosphoglucomutase, first 3 domains"/>
    <property type="match status" value="3"/>
</dbReference>
<gene>
    <name evidence="1" type="primary">glmM</name>
    <name type="ordered locus">Vapar_2626</name>
</gene>